<gene>
    <name evidence="1" type="primary">rpsK</name>
    <name type="ordered locus">lpp0417</name>
</gene>
<accession>Q5X836</accession>
<name>RS11_LEGPA</name>
<dbReference type="EMBL" id="CR628336">
    <property type="protein sequence ID" value="CAH11565.1"/>
    <property type="molecule type" value="Genomic_DNA"/>
</dbReference>
<dbReference type="RefSeq" id="WP_010946101.1">
    <property type="nucleotide sequence ID" value="NC_006368.1"/>
</dbReference>
<dbReference type="SMR" id="Q5X836"/>
<dbReference type="GeneID" id="57034355"/>
<dbReference type="KEGG" id="lpp:lpp0417"/>
<dbReference type="LegioList" id="lpp0417"/>
<dbReference type="HOGENOM" id="CLU_072439_5_0_6"/>
<dbReference type="GO" id="GO:1990904">
    <property type="term" value="C:ribonucleoprotein complex"/>
    <property type="evidence" value="ECO:0007669"/>
    <property type="project" value="UniProtKB-KW"/>
</dbReference>
<dbReference type="GO" id="GO:0005840">
    <property type="term" value="C:ribosome"/>
    <property type="evidence" value="ECO:0007669"/>
    <property type="project" value="UniProtKB-KW"/>
</dbReference>
<dbReference type="GO" id="GO:0019843">
    <property type="term" value="F:rRNA binding"/>
    <property type="evidence" value="ECO:0007669"/>
    <property type="project" value="UniProtKB-UniRule"/>
</dbReference>
<dbReference type="GO" id="GO:0003735">
    <property type="term" value="F:structural constituent of ribosome"/>
    <property type="evidence" value="ECO:0007669"/>
    <property type="project" value="InterPro"/>
</dbReference>
<dbReference type="GO" id="GO:0006412">
    <property type="term" value="P:translation"/>
    <property type="evidence" value="ECO:0007669"/>
    <property type="project" value="UniProtKB-UniRule"/>
</dbReference>
<dbReference type="FunFam" id="3.30.420.80:FF:000001">
    <property type="entry name" value="30S ribosomal protein S11"/>
    <property type="match status" value="1"/>
</dbReference>
<dbReference type="Gene3D" id="3.30.420.80">
    <property type="entry name" value="Ribosomal protein S11"/>
    <property type="match status" value="1"/>
</dbReference>
<dbReference type="HAMAP" id="MF_01310">
    <property type="entry name" value="Ribosomal_uS11"/>
    <property type="match status" value="1"/>
</dbReference>
<dbReference type="InterPro" id="IPR001971">
    <property type="entry name" value="Ribosomal_uS11"/>
</dbReference>
<dbReference type="InterPro" id="IPR019981">
    <property type="entry name" value="Ribosomal_uS11_bac-type"/>
</dbReference>
<dbReference type="InterPro" id="IPR036967">
    <property type="entry name" value="Ribosomal_uS11_sf"/>
</dbReference>
<dbReference type="NCBIfam" id="NF003698">
    <property type="entry name" value="PRK05309.1"/>
    <property type="match status" value="1"/>
</dbReference>
<dbReference type="NCBIfam" id="TIGR03632">
    <property type="entry name" value="uS11_bact"/>
    <property type="match status" value="1"/>
</dbReference>
<dbReference type="PANTHER" id="PTHR11759">
    <property type="entry name" value="40S RIBOSOMAL PROTEIN S14/30S RIBOSOMAL PROTEIN S11"/>
    <property type="match status" value="1"/>
</dbReference>
<dbReference type="Pfam" id="PF00411">
    <property type="entry name" value="Ribosomal_S11"/>
    <property type="match status" value="1"/>
</dbReference>
<dbReference type="PIRSF" id="PIRSF002131">
    <property type="entry name" value="Ribosomal_S11"/>
    <property type="match status" value="1"/>
</dbReference>
<dbReference type="SUPFAM" id="SSF53137">
    <property type="entry name" value="Translational machinery components"/>
    <property type="match status" value="1"/>
</dbReference>
<protein>
    <recommendedName>
        <fullName evidence="1">Small ribosomal subunit protein uS11</fullName>
    </recommendedName>
    <alternativeName>
        <fullName evidence="2">30S ribosomal protein S11</fullName>
    </alternativeName>
</protein>
<comment type="function">
    <text evidence="1">Located on the platform of the 30S subunit, it bridges several disparate RNA helices of the 16S rRNA. Forms part of the Shine-Dalgarno cleft in the 70S ribosome.</text>
</comment>
<comment type="subunit">
    <text evidence="1">Part of the 30S ribosomal subunit. Interacts with proteins S7 and S18. Binds to IF-3.</text>
</comment>
<comment type="similarity">
    <text evidence="1">Belongs to the universal ribosomal protein uS11 family.</text>
</comment>
<feature type="chain" id="PRO_0000123163" description="Small ribosomal subunit protein uS11">
    <location>
        <begin position="1"/>
        <end position="132"/>
    </location>
</feature>
<organism>
    <name type="scientific">Legionella pneumophila (strain Paris)</name>
    <dbReference type="NCBI Taxonomy" id="297246"/>
    <lineage>
        <taxon>Bacteria</taxon>
        <taxon>Pseudomonadati</taxon>
        <taxon>Pseudomonadota</taxon>
        <taxon>Gammaproteobacteria</taxon>
        <taxon>Legionellales</taxon>
        <taxon>Legionellaceae</taxon>
        <taxon>Legionella</taxon>
    </lineage>
</organism>
<reference key="1">
    <citation type="journal article" date="2004" name="Nat. Genet.">
        <title>Evidence in the Legionella pneumophila genome for exploitation of host cell functions and high genome plasticity.</title>
        <authorList>
            <person name="Cazalet C."/>
            <person name="Rusniok C."/>
            <person name="Brueggemann H."/>
            <person name="Zidane N."/>
            <person name="Magnier A."/>
            <person name="Ma L."/>
            <person name="Tichit M."/>
            <person name="Jarraud S."/>
            <person name="Bouchier C."/>
            <person name="Vandenesch F."/>
            <person name="Kunst F."/>
            <person name="Etienne J."/>
            <person name="Glaser P."/>
            <person name="Buchrieser C."/>
        </authorList>
    </citation>
    <scope>NUCLEOTIDE SEQUENCE [LARGE SCALE GENOMIC DNA]</scope>
    <source>
        <strain>Paris</strain>
    </source>
</reference>
<keyword id="KW-0687">Ribonucleoprotein</keyword>
<keyword id="KW-0689">Ribosomal protein</keyword>
<keyword id="KW-0694">RNA-binding</keyword>
<keyword id="KW-0699">rRNA-binding</keyword>
<proteinExistence type="inferred from homology"/>
<evidence type="ECO:0000255" key="1">
    <source>
        <dbReference type="HAMAP-Rule" id="MF_01310"/>
    </source>
</evidence>
<evidence type="ECO:0000305" key="2"/>
<sequence>MAITKSKQQKTRKKVKRVVSDGIVHIHASFNNTIVTFTDRQGNALCWATSGGSGFRGSRKSTPYAAQVATERAAAVAKEYGMKSVAVFVHGPGPGRESTIRELITQDFKIVEITDVTGIPHNGCKPPKKRRV</sequence>